<gene>
    <name evidence="1" type="primary">ureB</name>
    <name type="ordered locus">PFLU_0579</name>
</gene>
<accession>C3K5A2</accession>
<feature type="chain" id="PRO_1000216204" description="Urease subunit beta">
    <location>
        <begin position="1"/>
        <end position="101"/>
    </location>
</feature>
<reference key="1">
    <citation type="journal article" date="2009" name="Genome Biol.">
        <title>Genomic and genetic analyses of diversity and plant interactions of Pseudomonas fluorescens.</title>
        <authorList>
            <person name="Silby M.W."/>
            <person name="Cerdeno-Tarraga A.M."/>
            <person name="Vernikos G.S."/>
            <person name="Giddens S.R."/>
            <person name="Jackson R.W."/>
            <person name="Preston G.M."/>
            <person name="Zhang X.-X."/>
            <person name="Moon C.D."/>
            <person name="Gehrig S.M."/>
            <person name="Godfrey S.A.C."/>
            <person name="Knight C.G."/>
            <person name="Malone J.G."/>
            <person name="Robinson Z."/>
            <person name="Spiers A.J."/>
            <person name="Harris S."/>
            <person name="Challis G.L."/>
            <person name="Yaxley A.M."/>
            <person name="Harris D."/>
            <person name="Seeger K."/>
            <person name="Murphy L."/>
            <person name="Rutter S."/>
            <person name="Squares R."/>
            <person name="Quail M.A."/>
            <person name="Saunders E."/>
            <person name="Mavromatis K."/>
            <person name="Brettin T.S."/>
            <person name="Bentley S.D."/>
            <person name="Hothersall J."/>
            <person name="Stephens E."/>
            <person name="Thomas C.M."/>
            <person name="Parkhill J."/>
            <person name="Levy S.B."/>
            <person name="Rainey P.B."/>
            <person name="Thomson N.R."/>
        </authorList>
    </citation>
    <scope>NUCLEOTIDE SEQUENCE [LARGE SCALE GENOMIC DNA]</scope>
    <source>
        <strain>SBW25</strain>
    </source>
</reference>
<comment type="catalytic activity">
    <reaction evidence="1">
        <text>urea + 2 H2O + H(+) = hydrogencarbonate + 2 NH4(+)</text>
        <dbReference type="Rhea" id="RHEA:20557"/>
        <dbReference type="ChEBI" id="CHEBI:15377"/>
        <dbReference type="ChEBI" id="CHEBI:15378"/>
        <dbReference type="ChEBI" id="CHEBI:16199"/>
        <dbReference type="ChEBI" id="CHEBI:17544"/>
        <dbReference type="ChEBI" id="CHEBI:28938"/>
        <dbReference type="EC" id="3.5.1.5"/>
    </reaction>
</comment>
<comment type="pathway">
    <text evidence="1">Nitrogen metabolism; urea degradation; CO(2) and NH(3) from urea (urease route): step 1/1.</text>
</comment>
<comment type="subunit">
    <text evidence="1">Heterotrimer of UreA (gamma), UreB (beta) and UreC (alpha) subunits. Three heterotrimers associate to form the active enzyme.</text>
</comment>
<comment type="subcellular location">
    <subcellularLocation>
        <location evidence="1">Cytoplasm</location>
    </subcellularLocation>
</comment>
<comment type="similarity">
    <text evidence="1">Belongs to the urease beta subunit family.</text>
</comment>
<keyword id="KW-0963">Cytoplasm</keyword>
<keyword id="KW-0378">Hydrolase</keyword>
<protein>
    <recommendedName>
        <fullName evidence="1">Urease subunit beta</fullName>
        <ecNumber evidence="1">3.5.1.5</ecNumber>
    </recommendedName>
    <alternativeName>
        <fullName evidence="1">Urea amidohydrolase subunit beta</fullName>
    </alternativeName>
</protein>
<evidence type="ECO:0000255" key="1">
    <source>
        <dbReference type="HAMAP-Rule" id="MF_01954"/>
    </source>
</evidence>
<sequence>MIPGEYQIQPGDIELNVGRRTVTLSVANSGDRPIQVGSHYHFFETNDALTFDRAASRGMRLNIPAGTAVRFEPGQSREIELVDLSGGRRVFGFAGRIMGDL</sequence>
<dbReference type="EC" id="3.5.1.5" evidence="1"/>
<dbReference type="EMBL" id="AM181176">
    <property type="protein sequence ID" value="CAY46850.1"/>
    <property type="molecule type" value="Genomic_DNA"/>
</dbReference>
<dbReference type="RefSeq" id="WP_012721964.1">
    <property type="nucleotide sequence ID" value="NC_012660.1"/>
</dbReference>
<dbReference type="SMR" id="C3K5A2"/>
<dbReference type="STRING" id="294.SRM1_00645"/>
<dbReference type="eggNOG" id="COG0832">
    <property type="taxonomic scope" value="Bacteria"/>
</dbReference>
<dbReference type="HOGENOM" id="CLU_129707_1_1_6"/>
<dbReference type="OrthoDB" id="9797217at2"/>
<dbReference type="UniPathway" id="UPA00258">
    <property type="reaction ID" value="UER00370"/>
</dbReference>
<dbReference type="GO" id="GO:0035550">
    <property type="term" value="C:urease complex"/>
    <property type="evidence" value="ECO:0007669"/>
    <property type="project" value="InterPro"/>
</dbReference>
<dbReference type="GO" id="GO:0009039">
    <property type="term" value="F:urease activity"/>
    <property type="evidence" value="ECO:0007669"/>
    <property type="project" value="UniProtKB-UniRule"/>
</dbReference>
<dbReference type="GO" id="GO:0043419">
    <property type="term" value="P:urea catabolic process"/>
    <property type="evidence" value="ECO:0007669"/>
    <property type="project" value="UniProtKB-UniRule"/>
</dbReference>
<dbReference type="CDD" id="cd00407">
    <property type="entry name" value="Urease_beta"/>
    <property type="match status" value="1"/>
</dbReference>
<dbReference type="FunFam" id="2.10.150.10:FF:000001">
    <property type="entry name" value="Urease subunit beta"/>
    <property type="match status" value="1"/>
</dbReference>
<dbReference type="Gene3D" id="2.10.150.10">
    <property type="entry name" value="Urease, beta subunit"/>
    <property type="match status" value="1"/>
</dbReference>
<dbReference type="HAMAP" id="MF_01954">
    <property type="entry name" value="Urease_beta"/>
    <property type="match status" value="1"/>
</dbReference>
<dbReference type="InterPro" id="IPR002019">
    <property type="entry name" value="Urease_beta-like"/>
</dbReference>
<dbReference type="InterPro" id="IPR036461">
    <property type="entry name" value="Urease_betasu_sf"/>
</dbReference>
<dbReference type="InterPro" id="IPR050069">
    <property type="entry name" value="Urease_subunit"/>
</dbReference>
<dbReference type="NCBIfam" id="NF009682">
    <property type="entry name" value="PRK13203.1"/>
    <property type="match status" value="1"/>
</dbReference>
<dbReference type="NCBIfam" id="TIGR00192">
    <property type="entry name" value="urease_beta"/>
    <property type="match status" value="1"/>
</dbReference>
<dbReference type="PANTHER" id="PTHR33569">
    <property type="entry name" value="UREASE"/>
    <property type="match status" value="1"/>
</dbReference>
<dbReference type="PANTHER" id="PTHR33569:SF1">
    <property type="entry name" value="UREASE"/>
    <property type="match status" value="1"/>
</dbReference>
<dbReference type="Pfam" id="PF00699">
    <property type="entry name" value="Urease_beta"/>
    <property type="match status" value="1"/>
</dbReference>
<dbReference type="SUPFAM" id="SSF51278">
    <property type="entry name" value="Urease, beta-subunit"/>
    <property type="match status" value="1"/>
</dbReference>
<proteinExistence type="inferred from homology"/>
<name>URE2_PSEFS</name>
<organism>
    <name type="scientific">Pseudomonas fluorescens (strain SBW25)</name>
    <dbReference type="NCBI Taxonomy" id="216595"/>
    <lineage>
        <taxon>Bacteria</taxon>
        <taxon>Pseudomonadati</taxon>
        <taxon>Pseudomonadota</taxon>
        <taxon>Gammaproteobacteria</taxon>
        <taxon>Pseudomonadales</taxon>
        <taxon>Pseudomonadaceae</taxon>
        <taxon>Pseudomonas</taxon>
    </lineage>
</organism>